<organism>
    <name type="scientific">Burkholderia orbicola (strain AU 1054)</name>
    <dbReference type="NCBI Taxonomy" id="331271"/>
    <lineage>
        <taxon>Bacteria</taxon>
        <taxon>Pseudomonadati</taxon>
        <taxon>Pseudomonadota</taxon>
        <taxon>Betaproteobacteria</taxon>
        <taxon>Burkholderiales</taxon>
        <taxon>Burkholderiaceae</taxon>
        <taxon>Burkholderia</taxon>
        <taxon>Burkholderia cepacia complex</taxon>
        <taxon>Burkholderia orbicola</taxon>
    </lineage>
</organism>
<accession>Q1BZH3</accession>
<name>COQ7_BURO1</name>
<sequence length="208" mass="22619">MVLDELISEFDRGLRSLTGISRMSRPVPVPADTPDVELTPAERTHAAGLMRVNHVGEVCAQALYQAQKLTARTASAKAMFEEAAREEEDHLAWTAHRLKELDSRPSLLNPLWYAGALAIGVAAGTLGDKVSLGFMAETERQVESHLEGHMSELPPTDTASRAIVDQMRIDEVKHGKAATDAGGIELPLPARMLMRAASKVMTSTAYYL</sequence>
<proteinExistence type="inferred from homology"/>
<dbReference type="EC" id="1.14.99.60" evidence="1"/>
<dbReference type="EMBL" id="CP000378">
    <property type="protein sequence ID" value="ABF74982.1"/>
    <property type="molecule type" value="Genomic_DNA"/>
</dbReference>
<dbReference type="SMR" id="Q1BZH3"/>
<dbReference type="HOGENOM" id="CLU_088601_0_0_4"/>
<dbReference type="UniPathway" id="UPA00232"/>
<dbReference type="GO" id="GO:0005886">
    <property type="term" value="C:plasma membrane"/>
    <property type="evidence" value="ECO:0007669"/>
    <property type="project" value="UniProtKB-SubCell"/>
</dbReference>
<dbReference type="GO" id="GO:0008682">
    <property type="term" value="F:3-demethoxyubiquinol 3-hydroxylase activity"/>
    <property type="evidence" value="ECO:0007669"/>
    <property type="project" value="UniProtKB-EC"/>
</dbReference>
<dbReference type="GO" id="GO:0046872">
    <property type="term" value="F:metal ion binding"/>
    <property type="evidence" value="ECO:0007669"/>
    <property type="project" value="UniProtKB-KW"/>
</dbReference>
<dbReference type="GO" id="GO:0006744">
    <property type="term" value="P:ubiquinone biosynthetic process"/>
    <property type="evidence" value="ECO:0007669"/>
    <property type="project" value="UniProtKB-UniRule"/>
</dbReference>
<dbReference type="CDD" id="cd01042">
    <property type="entry name" value="DMQH"/>
    <property type="match status" value="1"/>
</dbReference>
<dbReference type="Gene3D" id="1.20.1260.10">
    <property type="match status" value="1"/>
</dbReference>
<dbReference type="HAMAP" id="MF_01658">
    <property type="entry name" value="COQ7"/>
    <property type="match status" value="1"/>
</dbReference>
<dbReference type="InterPro" id="IPR047809">
    <property type="entry name" value="COQ7_proteobact"/>
</dbReference>
<dbReference type="InterPro" id="IPR012347">
    <property type="entry name" value="Ferritin-like"/>
</dbReference>
<dbReference type="InterPro" id="IPR009078">
    <property type="entry name" value="Ferritin-like_SF"/>
</dbReference>
<dbReference type="InterPro" id="IPR011566">
    <property type="entry name" value="Ubq_synth_Coq7"/>
</dbReference>
<dbReference type="NCBIfam" id="NF033656">
    <property type="entry name" value="DMQ_monoox_COQ7"/>
    <property type="match status" value="1"/>
</dbReference>
<dbReference type="PANTHER" id="PTHR11237:SF4">
    <property type="entry name" value="5-DEMETHOXYUBIQUINONE HYDROXYLASE, MITOCHONDRIAL"/>
    <property type="match status" value="1"/>
</dbReference>
<dbReference type="PANTHER" id="PTHR11237">
    <property type="entry name" value="COENZYME Q10 BIOSYNTHESIS PROTEIN 7"/>
    <property type="match status" value="1"/>
</dbReference>
<dbReference type="Pfam" id="PF03232">
    <property type="entry name" value="COQ7"/>
    <property type="match status" value="1"/>
</dbReference>
<dbReference type="SUPFAM" id="SSF47240">
    <property type="entry name" value="Ferritin-like"/>
    <property type="match status" value="1"/>
</dbReference>
<comment type="function">
    <text evidence="1">Catalyzes the hydroxylation of 2-nonaprenyl-3-methyl-6-methoxy-1,4-benzoquinol during ubiquinone biosynthesis.</text>
</comment>
<comment type="catalytic activity">
    <reaction evidence="1">
        <text>a 5-methoxy-2-methyl-3-(all-trans-polyprenyl)benzene-1,4-diol + AH2 + O2 = a 3-demethylubiquinol + A + H2O</text>
        <dbReference type="Rhea" id="RHEA:50908"/>
        <dbReference type="Rhea" id="RHEA-COMP:10859"/>
        <dbReference type="Rhea" id="RHEA-COMP:10914"/>
        <dbReference type="ChEBI" id="CHEBI:13193"/>
        <dbReference type="ChEBI" id="CHEBI:15377"/>
        <dbReference type="ChEBI" id="CHEBI:15379"/>
        <dbReference type="ChEBI" id="CHEBI:17499"/>
        <dbReference type="ChEBI" id="CHEBI:84167"/>
        <dbReference type="ChEBI" id="CHEBI:84422"/>
        <dbReference type="EC" id="1.14.99.60"/>
    </reaction>
</comment>
<comment type="cofactor">
    <cofactor evidence="1">
        <name>Fe cation</name>
        <dbReference type="ChEBI" id="CHEBI:24875"/>
    </cofactor>
    <text evidence="1">Binds 2 iron ions per subunit.</text>
</comment>
<comment type="pathway">
    <text evidence="1">Cofactor biosynthesis; ubiquinone biosynthesis.</text>
</comment>
<comment type="subcellular location">
    <subcellularLocation>
        <location evidence="1">Cell membrane</location>
        <topology evidence="1">Peripheral membrane protein</topology>
    </subcellularLocation>
</comment>
<comment type="similarity">
    <text evidence="1">Belongs to the COQ7 family.</text>
</comment>
<feature type="chain" id="PRO_0000338663" description="3-demethoxyubiquinol 3-hydroxylase">
    <location>
        <begin position="1"/>
        <end position="208"/>
    </location>
</feature>
<feature type="binding site" evidence="1">
    <location>
        <position position="57"/>
    </location>
    <ligand>
        <name>Fe cation</name>
        <dbReference type="ChEBI" id="CHEBI:24875"/>
        <label>1</label>
    </ligand>
</feature>
<feature type="binding site" evidence="1">
    <location>
        <position position="87"/>
    </location>
    <ligand>
        <name>Fe cation</name>
        <dbReference type="ChEBI" id="CHEBI:24875"/>
        <label>1</label>
    </ligand>
</feature>
<feature type="binding site" evidence="1">
    <location>
        <position position="87"/>
    </location>
    <ligand>
        <name>Fe cation</name>
        <dbReference type="ChEBI" id="CHEBI:24875"/>
        <label>2</label>
    </ligand>
</feature>
<feature type="binding site" evidence="1">
    <location>
        <position position="90"/>
    </location>
    <ligand>
        <name>Fe cation</name>
        <dbReference type="ChEBI" id="CHEBI:24875"/>
        <label>1</label>
    </ligand>
</feature>
<feature type="binding site" evidence="1">
    <location>
        <position position="139"/>
    </location>
    <ligand>
        <name>Fe cation</name>
        <dbReference type="ChEBI" id="CHEBI:24875"/>
        <label>2</label>
    </ligand>
</feature>
<feature type="binding site" evidence="1">
    <location>
        <position position="171"/>
    </location>
    <ligand>
        <name>Fe cation</name>
        <dbReference type="ChEBI" id="CHEBI:24875"/>
        <label>1</label>
    </ligand>
</feature>
<feature type="binding site" evidence="1">
    <location>
        <position position="171"/>
    </location>
    <ligand>
        <name>Fe cation</name>
        <dbReference type="ChEBI" id="CHEBI:24875"/>
        <label>2</label>
    </ligand>
</feature>
<feature type="binding site" evidence="1">
    <location>
        <position position="174"/>
    </location>
    <ligand>
        <name>Fe cation</name>
        <dbReference type="ChEBI" id="CHEBI:24875"/>
        <label>2</label>
    </ligand>
</feature>
<gene>
    <name evidence="1" type="primary">coq7</name>
    <name type="ordered locus">Bcen_0067</name>
</gene>
<keyword id="KW-1003">Cell membrane</keyword>
<keyword id="KW-0408">Iron</keyword>
<keyword id="KW-0472">Membrane</keyword>
<keyword id="KW-0479">Metal-binding</keyword>
<keyword id="KW-0503">Monooxygenase</keyword>
<keyword id="KW-0560">Oxidoreductase</keyword>
<keyword id="KW-0831">Ubiquinone biosynthesis</keyword>
<protein>
    <recommendedName>
        <fullName evidence="1">3-demethoxyubiquinol 3-hydroxylase</fullName>
        <shortName evidence="1">DMQ hydroxylase</shortName>
        <ecNumber evidence="1">1.14.99.60</ecNumber>
    </recommendedName>
    <alternativeName>
        <fullName evidence="1">2-nonaprenyl-3-methyl-6-methoxy-1,4-benzoquinol hydroxylase</fullName>
    </alternativeName>
</protein>
<reference key="1">
    <citation type="submission" date="2006-05" db="EMBL/GenBank/DDBJ databases">
        <title>Complete sequence of chromosome 1 of Burkholderia cenocepacia AU 1054.</title>
        <authorList>
            <consortium name="US DOE Joint Genome Institute"/>
            <person name="Copeland A."/>
            <person name="Lucas S."/>
            <person name="Lapidus A."/>
            <person name="Barry K."/>
            <person name="Detter J.C."/>
            <person name="Glavina del Rio T."/>
            <person name="Hammon N."/>
            <person name="Israni S."/>
            <person name="Dalin E."/>
            <person name="Tice H."/>
            <person name="Pitluck S."/>
            <person name="Chain P."/>
            <person name="Malfatti S."/>
            <person name="Shin M."/>
            <person name="Vergez L."/>
            <person name="Schmutz J."/>
            <person name="Larimer F."/>
            <person name="Land M."/>
            <person name="Hauser L."/>
            <person name="Kyrpides N."/>
            <person name="Lykidis A."/>
            <person name="LiPuma J.J."/>
            <person name="Konstantinidis K."/>
            <person name="Tiedje J.M."/>
            <person name="Richardson P."/>
        </authorList>
    </citation>
    <scope>NUCLEOTIDE SEQUENCE [LARGE SCALE GENOMIC DNA]</scope>
    <source>
        <strain>AU 1054</strain>
    </source>
</reference>
<evidence type="ECO:0000255" key="1">
    <source>
        <dbReference type="HAMAP-Rule" id="MF_01658"/>
    </source>
</evidence>